<gene>
    <name evidence="1" type="primary">ureD</name>
    <name type="ordered locus">Mfla_1770</name>
</gene>
<comment type="function">
    <text evidence="1">Required for maturation of urease via the functional incorporation of the urease nickel metallocenter.</text>
</comment>
<comment type="subunit">
    <text evidence="1">UreD, UreF and UreG form a complex that acts as a GTP-hydrolysis-dependent molecular chaperone, activating the urease apoprotein by helping to assemble the nickel containing metallocenter of UreC. The UreE protein probably delivers the nickel.</text>
</comment>
<comment type="subcellular location">
    <subcellularLocation>
        <location evidence="1">Cytoplasm</location>
    </subcellularLocation>
</comment>
<comment type="similarity">
    <text evidence="1">Belongs to the UreD family.</text>
</comment>
<protein>
    <recommendedName>
        <fullName evidence="1">Urease accessory protein UreD</fullName>
    </recommendedName>
</protein>
<reference key="1">
    <citation type="submission" date="2006-03" db="EMBL/GenBank/DDBJ databases">
        <title>Complete sequence of Methylobacillus flagellatus KT.</title>
        <authorList>
            <consortium name="US DOE Joint Genome Institute"/>
            <person name="Copeland A."/>
            <person name="Lucas S."/>
            <person name="Lapidus A."/>
            <person name="Barry K."/>
            <person name="Detter J.C."/>
            <person name="Glavina del Rio T."/>
            <person name="Hammon N."/>
            <person name="Israni S."/>
            <person name="Dalin E."/>
            <person name="Tice H."/>
            <person name="Pitluck S."/>
            <person name="Brettin T."/>
            <person name="Bruce D."/>
            <person name="Han C."/>
            <person name="Tapia R."/>
            <person name="Saunders E."/>
            <person name="Gilna P."/>
            <person name="Schmutz J."/>
            <person name="Larimer F."/>
            <person name="Land M."/>
            <person name="Kyrpides N."/>
            <person name="Anderson I."/>
            <person name="Richardson P."/>
        </authorList>
    </citation>
    <scope>NUCLEOTIDE SEQUENCE [LARGE SCALE GENOMIC DNA]</scope>
    <source>
        <strain>ATCC 51484 / DSM 6875 / VKM B-1610 / KT</strain>
    </source>
</reference>
<sequence length="285" mass="31464">MDDVNTKTAAWADKRWQALLALDFSSRAGRTTLIGKRHQGPLVVQKMLYPEGDEVCHGIIIHPPGGVAGGDQLQLQATLEASARALLTTPGAGKWYKANQLSASQAVRFHLAANSCLEWLPQENILFDGSNVHFSSEIDLAEGAVFCGWDILCFGRQARGERWSEGELRQVMQVRREGRLIWNERLFAQPDSLVMRSGIGLKGMPVNGSLVVAAGTVPVEIIEACRAIEARGDAHYGVTALPEILSARYIGASSEAAKEYFERLWQVLRPWYAARPATRPRIWNT</sequence>
<evidence type="ECO:0000255" key="1">
    <source>
        <dbReference type="HAMAP-Rule" id="MF_01384"/>
    </source>
</evidence>
<dbReference type="EMBL" id="CP000284">
    <property type="protein sequence ID" value="ABE50038.1"/>
    <property type="molecule type" value="Genomic_DNA"/>
</dbReference>
<dbReference type="RefSeq" id="WP_011479992.1">
    <property type="nucleotide sequence ID" value="NC_007947.1"/>
</dbReference>
<dbReference type="SMR" id="Q1H0E9"/>
<dbReference type="STRING" id="265072.Mfla_1770"/>
<dbReference type="KEGG" id="mfa:Mfla_1770"/>
<dbReference type="eggNOG" id="COG0829">
    <property type="taxonomic scope" value="Bacteria"/>
</dbReference>
<dbReference type="HOGENOM" id="CLU_056339_0_0_4"/>
<dbReference type="OrthoDB" id="9798842at2"/>
<dbReference type="Proteomes" id="UP000002440">
    <property type="component" value="Chromosome"/>
</dbReference>
<dbReference type="GO" id="GO:0005737">
    <property type="term" value="C:cytoplasm"/>
    <property type="evidence" value="ECO:0007669"/>
    <property type="project" value="UniProtKB-SubCell"/>
</dbReference>
<dbReference type="GO" id="GO:0016151">
    <property type="term" value="F:nickel cation binding"/>
    <property type="evidence" value="ECO:0007669"/>
    <property type="project" value="UniProtKB-UniRule"/>
</dbReference>
<dbReference type="HAMAP" id="MF_01384">
    <property type="entry name" value="UreD"/>
    <property type="match status" value="1"/>
</dbReference>
<dbReference type="InterPro" id="IPR002669">
    <property type="entry name" value="UreD"/>
</dbReference>
<dbReference type="PANTHER" id="PTHR33643">
    <property type="entry name" value="UREASE ACCESSORY PROTEIN D"/>
    <property type="match status" value="1"/>
</dbReference>
<dbReference type="PANTHER" id="PTHR33643:SF1">
    <property type="entry name" value="UREASE ACCESSORY PROTEIN D"/>
    <property type="match status" value="1"/>
</dbReference>
<dbReference type="Pfam" id="PF01774">
    <property type="entry name" value="UreD"/>
    <property type="match status" value="1"/>
</dbReference>
<accession>Q1H0E9</accession>
<proteinExistence type="inferred from homology"/>
<keyword id="KW-0143">Chaperone</keyword>
<keyword id="KW-0963">Cytoplasm</keyword>
<keyword id="KW-0996">Nickel insertion</keyword>
<keyword id="KW-1185">Reference proteome</keyword>
<feature type="chain" id="PRO_0000340464" description="Urease accessory protein UreD">
    <location>
        <begin position="1"/>
        <end position="285"/>
    </location>
</feature>
<organism>
    <name type="scientific">Methylobacillus flagellatus (strain ATCC 51484 / DSM 6875 / VKM B-1610 / KT)</name>
    <dbReference type="NCBI Taxonomy" id="265072"/>
    <lineage>
        <taxon>Bacteria</taxon>
        <taxon>Pseudomonadati</taxon>
        <taxon>Pseudomonadota</taxon>
        <taxon>Betaproteobacteria</taxon>
        <taxon>Nitrosomonadales</taxon>
        <taxon>Methylophilaceae</taxon>
        <taxon>Methylobacillus</taxon>
    </lineage>
</organism>
<name>URED_METFK</name>